<sequence>MVRLPRKFKRVLLLVVLLTLVVFVRFKKQYIPTISVFEGSLIDNRDTLSYFNISNLEPSERSEWLPNKRVNAAFVTLARNEDLNDLLKSIRKLEKTFNHKYHYGWVFLNNEEFSDEFKEHVIEAVSGKCEFGLVPQEQWSIPEYIDQDKMHENWKKLQELGILYADKESYRHMCRFESGFFYRHPLVQKYEYYWRVEPSVDFFCDLDFDPFAYMKENNKAYAFTITVTEYSETIPSLWPSTKEFIKMHPNALHPNNALNFISNDDGETYNGCHFWTNFEIAKVDFWESEVYSKYFDYLDKSGNFFYERWGDAPVHSIAVSLFADRDNIHFFNEIGYWHPGSGHCPLDDATRAKCDCDPYESIDYNGWSCLDKFYTAFEMPFPENWSFYSH</sequence>
<name>OMH1_SCHPO</name>
<gene>
    <name type="primary">omh1</name>
    <name type="ORF">SPBC19C7.12c</name>
</gene>
<reference key="1">
    <citation type="journal article" date="2002" name="Nature">
        <title>The genome sequence of Schizosaccharomyces pombe.</title>
        <authorList>
            <person name="Wood V."/>
            <person name="Gwilliam R."/>
            <person name="Rajandream M.A."/>
            <person name="Lyne M.H."/>
            <person name="Lyne R."/>
            <person name="Stewart A."/>
            <person name="Sgouros J.G."/>
            <person name="Peat N."/>
            <person name="Hayles J."/>
            <person name="Baker S.G."/>
            <person name="Basham D."/>
            <person name="Bowman S."/>
            <person name="Brooks K."/>
            <person name="Brown D."/>
            <person name="Brown S."/>
            <person name="Chillingworth T."/>
            <person name="Churcher C.M."/>
            <person name="Collins M."/>
            <person name="Connor R."/>
            <person name="Cronin A."/>
            <person name="Davis P."/>
            <person name="Feltwell T."/>
            <person name="Fraser A."/>
            <person name="Gentles S."/>
            <person name="Goble A."/>
            <person name="Hamlin N."/>
            <person name="Harris D.E."/>
            <person name="Hidalgo J."/>
            <person name="Hodgson G."/>
            <person name="Holroyd S."/>
            <person name="Hornsby T."/>
            <person name="Howarth S."/>
            <person name="Huckle E.J."/>
            <person name="Hunt S."/>
            <person name="Jagels K."/>
            <person name="James K.D."/>
            <person name="Jones L."/>
            <person name="Jones M."/>
            <person name="Leather S."/>
            <person name="McDonald S."/>
            <person name="McLean J."/>
            <person name="Mooney P."/>
            <person name="Moule S."/>
            <person name="Mungall K.L."/>
            <person name="Murphy L.D."/>
            <person name="Niblett D."/>
            <person name="Odell C."/>
            <person name="Oliver K."/>
            <person name="O'Neil S."/>
            <person name="Pearson D."/>
            <person name="Quail M.A."/>
            <person name="Rabbinowitsch E."/>
            <person name="Rutherford K.M."/>
            <person name="Rutter S."/>
            <person name="Saunders D."/>
            <person name="Seeger K."/>
            <person name="Sharp S."/>
            <person name="Skelton J."/>
            <person name="Simmonds M.N."/>
            <person name="Squares R."/>
            <person name="Squares S."/>
            <person name="Stevens K."/>
            <person name="Taylor K."/>
            <person name="Taylor R.G."/>
            <person name="Tivey A."/>
            <person name="Walsh S.V."/>
            <person name="Warren T."/>
            <person name="Whitehead S."/>
            <person name="Woodward J.R."/>
            <person name="Volckaert G."/>
            <person name="Aert R."/>
            <person name="Robben J."/>
            <person name="Grymonprez B."/>
            <person name="Weltjens I."/>
            <person name="Vanstreels E."/>
            <person name="Rieger M."/>
            <person name="Schaefer M."/>
            <person name="Mueller-Auer S."/>
            <person name="Gabel C."/>
            <person name="Fuchs M."/>
            <person name="Duesterhoeft A."/>
            <person name="Fritzc C."/>
            <person name="Holzer E."/>
            <person name="Moestl D."/>
            <person name="Hilbert H."/>
            <person name="Borzym K."/>
            <person name="Langer I."/>
            <person name="Beck A."/>
            <person name="Lehrach H."/>
            <person name="Reinhardt R."/>
            <person name="Pohl T.M."/>
            <person name="Eger P."/>
            <person name="Zimmermann W."/>
            <person name="Wedler H."/>
            <person name="Wambutt R."/>
            <person name="Purnelle B."/>
            <person name="Goffeau A."/>
            <person name="Cadieu E."/>
            <person name="Dreano S."/>
            <person name="Gloux S."/>
            <person name="Lelaure V."/>
            <person name="Mottier S."/>
            <person name="Galibert F."/>
            <person name="Aves S.J."/>
            <person name="Xiang Z."/>
            <person name="Hunt C."/>
            <person name="Moore K."/>
            <person name="Hurst S.M."/>
            <person name="Lucas M."/>
            <person name="Rochet M."/>
            <person name="Gaillardin C."/>
            <person name="Tallada V.A."/>
            <person name="Garzon A."/>
            <person name="Thode G."/>
            <person name="Daga R.R."/>
            <person name="Cruzado L."/>
            <person name="Jimenez J."/>
            <person name="Sanchez M."/>
            <person name="del Rey F."/>
            <person name="Benito J."/>
            <person name="Dominguez A."/>
            <person name="Revuelta J.L."/>
            <person name="Moreno S."/>
            <person name="Armstrong J."/>
            <person name="Forsburg S.L."/>
            <person name="Cerutti L."/>
            <person name="Lowe T."/>
            <person name="McCombie W.R."/>
            <person name="Paulsen I."/>
            <person name="Potashkin J."/>
            <person name="Shpakovski G.V."/>
            <person name="Ussery D."/>
            <person name="Barrell B.G."/>
            <person name="Nurse P."/>
        </authorList>
    </citation>
    <scope>NUCLEOTIDE SEQUENCE [LARGE SCALE GENOMIC DNA]</scope>
    <source>
        <strain>972 / ATCC 24843</strain>
    </source>
</reference>
<reference key="2">
    <citation type="journal article" date="2006" name="Nat. Biotechnol.">
        <title>ORFeome cloning and global analysis of protein localization in the fission yeast Schizosaccharomyces pombe.</title>
        <authorList>
            <person name="Matsuyama A."/>
            <person name="Arai R."/>
            <person name="Yashiroda Y."/>
            <person name="Shirai A."/>
            <person name="Kamata A."/>
            <person name="Sekido S."/>
            <person name="Kobayashi Y."/>
            <person name="Hashimoto A."/>
            <person name="Hamamoto M."/>
            <person name="Hiraoka Y."/>
            <person name="Horinouchi S."/>
            <person name="Yoshida M."/>
        </authorList>
    </citation>
    <scope>SUBCELLULAR LOCATION [LARGE SCALE ANALYSIS]</scope>
</reference>
<reference key="3">
    <citation type="journal article" date="2009" name="FEMS Yeast Res.">
        <title>Identification and characterization of a gene required for alpha1,2-mannose extension in the O-linked glycan synthesis pathway in Schizosaccharomyces pombe.</title>
        <authorList>
            <person name="Ikeda Y."/>
            <person name="Ohashi T."/>
            <person name="Tanaka N."/>
            <person name="Takegawa K."/>
        </authorList>
    </citation>
    <scope>FUNCTION</scope>
    <scope>SUBCELLULAR LOCATION</scope>
</reference>
<dbReference type="EC" id="2.4.1.-"/>
<dbReference type="EMBL" id="CU329671">
    <property type="protein sequence ID" value="CAA19580.1"/>
    <property type="molecule type" value="Genomic_DNA"/>
</dbReference>
<dbReference type="PIR" id="T39818">
    <property type="entry name" value="T39818"/>
</dbReference>
<dbReference type="RefSeq" id="NP_596168.1">
    <property type="nucleotide sequence ID" value="NM_001022088.2"/>
</dbReference>
<dbReference type="SMR" id="O60160"/>
<dbReference type="BioGRID" id="277229">
    <property type="interactions" value="21"/>
</dbReference>
<dbReference type="FunCoup" id="O60160">
    <property type="interactions" value="159"/>
</dbReference>
<dbReference type="STRING" id="284812.O60160"/>
<dbReference type="CAZy" id="GT15">
    <property type="family name" value="Glycosyltransferase Family 15"/>
</dbReference>
<dbReference type="iPTMnet" id="O60160"/>
<dbReference type="PaxDb" id="4896-SPBC19C7.12c.1"/>
<dbReference type="EnsemblFungi" id="SPBC19C7.12c.1">
    <property type="protein sequence ID" value="SPBC19C7.12c.1:pep"/>
    <property type="gene ID" value="SPBC19C7.12c"/>
</dbReference>
<dbReference type="GeneID" id="2540706"/>
<dbReference type="KEGG" id="spo:2540706"/>
<dbReference type="PomBase" id="SPBC19C7.12c">
    <property type="gene designation" value="omh1"/>
</dbReference>
<dbReference type="VEuPathDB" id="FungiDB:SPBC19C7.12c"/>
<dbReference type="eggNOG" id="KOG4472">
    <property type="taxonomic scope" value="Eukaryota"/>
</dbReference>
<dbReference type="HOGENOM" id="CLU_024327_4_1_1"/>
<dbReference type="InParanoid" id="O60160"/>
<dbReference type="OMA" id="HWYSCTP"/>
<dbReference type="PhylomeDB" id="O60160"/>
<dbReference type="PRO" id="PR:O60160"/>
<dbReference type="Proteomes" id="UP000002485">
    <property type="component" value="Chromosome II"/>
</dbReference>
<dbReference type="GO" id="GO:0005783">
    <property type="term" value="C:endoplasmic reticulum"/>
    <property type="evidence" value="ECO:0007669"/>
    <property type="project" value="UniProtKB-SubCell"/>
</dbReference>
<dbReference type="GO" id="GO:0005794">
    <property type="term" value="C:Golgi apparatus"/>
    <property type="evidence" value="ECO:0000318"/>
    <property type="project" value="GO_Central"/>
</dbReference>
<dbReference type="GO" id="GO:0000139">
    <property type="term" value="C:Golgi membrane"/>
    <property type="evidence" value="ECO:0000314"/>
    <property type="project" value="PomBase"/>
</dbReference>
<dbReference type="GO" id="GO:0000026">
    <property type="term" value="F:alpha-1,2-mannosyltransferase activity"/>
    <property type="evidence" value="ECO:0000315"/>
    <property type="project" value="PomBase"/>
</dbReference>
<dbReference type="GO" id="GO:0000032">
    <property type="term" value="P:cell wall mannoprotein biosynthetic process"/>
    <property type="evidence" value="ECO:0000318"/>
    <property type="project" value="GO_Central"/>
</dbReference>
<dbReference type="GO" id="GO:0006487">
    <property type="term" value="P:protein N-linked glycosylation"/>
    <property type="evidence" value="ECO:0000318"/>
    <property type="project" value="GO_Central"/>
</dbReference>
<dbReference type="GO" id="GO:0006493">
    <property type="term" value="P:protein O-linked glycosylation"/>
    <property type="evidence" value="ECO:0000318"/>
    <property type="project" value="GO_Central"/>
</dbReference>
<dbReference type="GO" id="GO:0035269">
    <property type="term" value="P:protein O-linked mannosylation"/>
    <property type="evidence" value="ECO:0000315"/>
    <property type="project" value="PomBase"/>
</dbReference>
<dbReference type="FunFam" id="3.90.550.10:FF:000051">
    <property type="entry name" value="Alpha-1,2-mannosyltransferase (Ktr4)"/>
    <property type="match status" value="1"/>
</dbReference>
<dbReference type="Gene3D" id="3.90.550.10">
    <property type="entry name" value="Spore Coat Polysaccharide Biosynthesis Protein SpsA, Chain A"/>
    <property type="match status" value="1"/>
</dbReference>
<dbReference type="InterPro" id="IPR002685">
    <property type="entry name" value="Glyco_trans_15"/>
</dbReference>
<dbReference type="InterPro" id="IPR029044">
    <property type="entry name" value="Nucleotide-diphossugar_trans"/>
</dbReference>
<dbReference type="PANTHER" id="PTHR31121">
    <property type="entry name" value="ALPHA-1,2 MANNOSYLTRANSFERASE KTR1"/>
    <property type="match status" value="1"/>
</dbReference>
<dbReference type="PANTHER" id="PTHR31121:SF6">
    <property type="entry name" value="ALPHA-1,2 MANNOSYLTRANSFERASE KTR1"/>
    <property type="match status" value="1"/>
</dbReference>
<dbReference type="Pfam" id="PF01793">
    <property type="entry name" value="Glyco_transf_15"/>
    <property type="match status" value="1"/>
</dbReference>
<dbReference type="PIRSF" id="PIRSF018153">
    <property type="entry name" value="Glyco_trans_15"/>
    <property type="match status" value="1"/>
</dbReference>
<dbReference type="SUPFAM" id="SSF53448">
    <property type="entry name" value="Nucleotide-diphospho-sugar transferases"/>
    <property type="match status" value="1"/>
</dbReference>
<comment type="function">
    <text evidence="3">Mannosyltransferase involved in O-glycosylation of cell wall and secreted proteins. Plays a major role in extending alpha-1,2-linked mannose in the O-glycan pathway.</text>
</comment>
<comment type="subcellular location">
    <subcellularLocation>
        <location evidence="2">Endoplasmic reticulum</location>
    </subcellularLocation>
    <subcellularLocation>
        <location evidence="2 3">Golgi apparatus</location>
    </subcellularLocation>
</comment>
<comment type="similarity">
    <text evidence="4">Belongs to the glycosyltransferase 15 family.</text>
</comment>
<accession>O60160</accession>
<evidence type="ECO:0000255" key="1"/>
<evidence type="ECO:0000269" key="2">
    <source>
    </source>
</evidence>
<evidence type="ECO:0000269" key="3">
    <source>
    </source>
</evidence>
<evidence type="ECO:0000305" key="4"/>
<protein>
    <recommendedName>
        <fullName>O-glycoside alpha-1,2-mannosyltransferase omh1</fullName>
        <ecNumber>2.4.1.-</ecNumber>
    </recommendedName>
</protein>
<keyword id="KW-0256">Endoplasmic reticulum</keyword>
<keyword id="KW-0328">Glycosyltransferase</keyword>
<keyword id="KW-0333">Golgi apparatus</keyword>
<keyword id="KW-1185">Reference proteome</keyword>
<keyword id="KW-0808">Transferase</keyword>
<organism>
    <name type="scientific">Schizosaccharomyces pombe (strain 972 / ATCC 24843)</name>
    <name type="common">Fission yeast</name>
    <dbReference type="NCBI Taxonomy" id="284812"/>
    <lineage>
        <taxon>Eukaryota</taxon>
        <taxon>Fungi</taxon>
        <taxon>Dikarya</taxon>
        <taxon>Ascomycota</taxon>
        <taxon>Taphrinomycotina</taxon>
        <taxon>Schizosaccharomycetes</taxon>
        <taxon>Schizosaccharomycetales</taxon>
        <taxon>Schizosaccharomycetaceae</taxon>
        <taxon>Schizosaccharomyces</taxon>
    </lineage>
</organism>
<feature type="chain" id="PRO_0000316587" description="O-glycoside alpha-1,2-mannosyltransferase omh1">
    <location>
        <begin position="1"/>
        <end position="390"/>
    </location>
</feature>
<feature type="active site" description="Nucleophile" evidence="1">
    <location>
        <position position="279"/>
    </location>
</feature>
<proteinExistence type="inferred from homology"/>